<accession>Q822R7</accession>
<evidence type="ECO:0000255" key="1">
    <source>
        <dbReference type="HAMAP-Rule" id="MF_00049"/>
    </source>
</evidence>
<gene>
    <name evidence="1" type="primary">leuS</name>
    <name type="ordered locus">CCA_00612</name>
</gene>
<keyword id="KW-0030">Aminoacyl-tRNA synthetase</keyword>
<keyword id="KW-0067">ATP-binding</keyword>
<keyword id="KW-0963">Cytoplasm</keyword>
<keyword id="KW-0436">Ligase</keyword>
<keyword id="KW-0547">Nucleotide-binding</keyword>
<keyword id="KW-0648">Protein biosynthesis</keyword>
<dbReference type="EC" id="6.1.1.4" evidence="1"/>
<dbReference type="EMBL" id="AE015925">
    <property type="protein sequence ID" value="AAP05354.1"/>
    <property type="molecule type" value="Genomic_DNA"/>
</dbReference>
<dbReference type="RefSeq" id="WP_011006569.1">
    <property type="nucleotide sequence ID" value="NC_003361.3"/>
</dbReference>
<dbReference type="SMR" id="Q822R7"/>
<dbReference type="STRING" id="227941.CCA_00612"/>
<dbReference type="KEGG" id="cca:CCA_00612"/>
<dbReference type="eggNOG" id="COG0495">
    <property type="taxonomic scope" value="Bacteria"/>
</dbReference>
<dbReference type="HOGENOM" id="CLU_004427_0_0_0"/>
<dbReference type="OrthoDB" id="9810365at2"/>
<dbReference type="Proteomes" id="UP000002193">
    <property type="component" value="Chromosome"/>
</dbReference>
<dbReference type="GO" id="GO:0005829">
    <property type="term" value="C:cytosol"/>
    <property type="evidence" value="ECO:0007669"/>
    <property type="project" value="TreeGrafter"/>
</dbReference>
<dbReference type="GO" id="GO:0002161">
    <property type="term" value="F:aminoacyl-tRNA deacylase activity"/>
    <property type="evidence" value="ECO:0007669"/>
    <property type="project" value="InterPro"/>
</dbReference>
<dbReference type="GO" id="GO:0005524">
    <property type="term" value="F:ATP binding"/>
    <property type="evidence" value="ECO:0007669"/>
    <property type="project" value="UniProtKB-UniRule"/>
</dbReference>
<dbReference type="GO" id="GO:0004823">
    <property type="term" value="F:leucine-tRNA ligase activity"/>
    <property type="evidence" value="ECO:0007669"/>
    <property type="project" value="UniProtKB-UniRule"/>
</dbReference>
<dbReference type="GO" id="GO:0006429">
    <property type="term" value="P:leucyl-tRNA aminoacylation"/>
    <property type="evidence" value="ECO:0007669"/>
    <property type="project" value="UniProtKB-UniRule"/>
</dbReference>
<dbReference type="CDD" id="cd07958">
    <property type="entry name" value="Anticodon_Ia_Leu_BEm"/>
    <property type="match status" value="1"/>
</dbReference>
<dbReference type="CDD" id="cd00812">
    <property type="entry name" value="LeuRS_core"/>
    <property type="match status" value="1"/>
</dbReference>
<dbReference type="FunFam" id="1.10.730.10:FF:000002">
    <property type="entry name" value="Leucine--tRNA ligase"/>
    <property type="match status" value="1"/>
</dbReference>
<dbReference type="FunFam" id="3.40.50.620:FF:000056">
    <property type="entry name" value="Leucine--tRNA ligase"/>
    <property type="match status" value="1"/>
</dbReference>
<dbReference type="FunFam" id="3.40.50.620:FF:000077">
    <property type="entry name" value="Leucine--tRNA ligase"/>
    <property type="match status" value="1"/>
</dbReference>
<dbReference type="Gene3D" id="3.40.50.620">
    <property type="entry name" value="HUPs"/>
    <property type="match status" value="2"/>
</dbReference>
<dbReference type="Gene3D" id="1.10.730.10">
    <property type="entry name" value="Isoleucyl-tRNA Synthetase, Domain 1"/>
    <property type="match status" value="2"/>
</dbReference>
<dbReference type="HAMAP" id="MF_00049_B">
    <property type="entry name" value="Leu_tRNA_synth_B"/>
    <property type="match status" value="1"/>
</dbReference>
<dbReference type="InterPro" id="IPR001412">
    <property type="entry name" value="aa-tRNA-synth_I_CS"/>
</dbReference>
<dbReference type="InterPro" id="IPR002300">
    <property type="entry name" value="aa-tRNA-synth_Ia"/>
</dbReference>
<dbReference type="InterPro" id="IPR002302">
    <property type="entry name" value="Leu-tRNA-ligase"/>
</dbReference>
<dbReference type="InterPro" id="IPR025709">
    <property type="entry name" value="Leu_tRNA-synth_edit"/>
</dbReference>
<dbReference type="InterPro" id="IPR013155">
    <property type="entry name" value="M/V/L/I-tRNA-synth_anticd-bd"/>
</dbReference>
<dbReference type="InterPro" id="IPR015413">
    <property type="entry name" value="Methionyl/Leucyl_tRNA_Synth"/>
</dbReference>
<dbReference type="InterPro" id="IPR014729">
    <property type="entry name" value="Rossmann-like_a/b/a_fold"/>
</dbReference>
<dbReference type="InterPro" id="IPR009080">
    <property type="entry name" value="tRNAsynth_Ia_anticodon-bd"/>
</dbReference>
<dbReference type="InterPro" id="IPR009008">
    <property type="entry name" value="Val/Leu/Ile-tRNA-synth_edit"/>
</dbReference>
<dbReference type="NCBIfam" id="TIGR00396">
    <property type="entry name" value="leuS_bact"/>
    <property type="match status" value="1"/>
</dbReference>
<dbReference type="PANTHER" id="PTHR43740:SF2">
    <property type="entry name" value="LEUCINE--TRNA LIGASE, MITOCHONDRIAL"/>
    <property type="match status" value="1"/>
</dbReference>
<dbReference type="PANTHER" id="PTHR43740">
    <property type="entry name" value="LEUCYL-TRNA SYNTHETASE"/>
    <property type="match status" value="1"/>
</dbReference>
<dbReference type="Pfam" id="PF08264">
    <property type="entry name" value="Anticodon_1"/>
    <property type="match status" value="1"/>
</dbReference>
<dbReference type="Pfam" id="PF00133">
    <property type="entry name" value="tRNA-synt_1"/>
    <property type="match status" value="1"/>
</dbReference>
<dbReference type="Pfam" id="PF13603">
    <property type="entry name" value="tRNA-synt_1_2"/>
    <property type="match status" value="1"/>
</dbReference>
<dbReference type="Pfam" id="PF09334">
    <property type="entry name" value="tRNA-synt_1g"/>
    <property type="match status" value="1"/>
</dbReference>
<dbReference type="PRINTS" id="PR00985">
    <property type="entry name" value="TRNASYNTHLEU"/>
</dbReference>
<dbReference type="SUPFAM" id="SSF47323">
    <property type="entry name" value="Anticodon-binding domain of a subclass of class I aminoacyl-tRNA synthetases"/>
    <property type="match status" value="1"/>
</dbReference>
<dbReference type="SUPFAM" id="SSF52374">
    <property type="entry name" value="Nucleotidylyl transferase"/>
    <property type="match status" value="1"/>
</dbReference>
<dbReference type="SUPFAM" id="SSF50677">
    <property type="entry name" value="ValRS/IleRS/LeuRS editing domain"/>
    <property type="match status" value="1"/>
</dbReference>
<dbReference type="PROSITE" id="PS00178">
    <property type="entry name" value="AA_TRNA_LIGASE_I"/>
    <property type="match status" value="1"/>
</dbReference>
<reference key="1">
    <citation type="journal article" date="2003" name="Nucleic Acids Res.">
        <title>Genome sequence of Chlamydophila caviae (Chlamydia psittaci GPIC): examining the role of niche-specific genes in the evolution of the Chlamydiaceae.</title>
        <authorList>
            <person name="Read T.D."/>
            <person name="Myers G.S.A."/>
            <person name="Brunham R.C."/>
            <person name="Nelson W.C."/>
            <person name="Paulsen I.T."/>
            <person name="Heidelberg J.F."/>
            <person name="Holtzapple E.K."/>
            <person name="Khouri H.M."/>
            <person name="Federova N.B."/>
            <person name="Carty H.A."/>
            <person name="Umayam L.A."/>
            <person name="Haft D.H."/>
            <person name="Peterson J.D."/>
            <person name="Beanan M.J."/>
            <person name="White O."/>
            <person name="Salzberg S.L."/>
            <person name="Hsia R.-C."/>
            <person name="McClarty G."/>
            <person name="Rank R.G."/>
            <person name="Bavoil P.M."/>
            <person name="Fraser C.M."/>
        </authorList>
    </citation>
    <scope>NUCLEOTIDE SEQUENCE [LARGE SCALE GENOMIC DNA]</scope>
    <source>
        <strain>ATCC VR-813 / DSM 19441 / 03DC25 / GPIC</strain>
    </source>
</reference>
<sequence>MRYDPSLIEKKWQEFWKEHKSFEADEASDKPKYYVLDMFPYPSGAGLHVGHLIGYTATDIVARYKRAKGYAVLHPMGWDSFGLPAEQYAVRTGTHPRETTQKNIENFRKQLSAMGFSYDEGREFATSDPDYYRWTQKLFLFLYEKGLAYMADMAVNYCPELGTVLSNEEVENGLSVEGGYPVERRMLRQWILRITAYSDQLLEGLEDLDWPENVKQLQRNWIGKSEGALVRFEVNNERFLEVFTTRPDTIGGVSFLVVAPEHPEVNRLISENQREAVESYIRAAQSKSERDRISETKVKTGVFTGTYAKHPVTGADIPIWISDYVILGYGSGVVMGVPAHDERDREFAEAFSLPIYEVLDKDECCIHSNHGDFLLDGLAGQEARDYVIAYLQKKNLGEAKVAYKLRDWLFSRQRYWGEPIPIIHFEDGTCRPLEDDELPLLPPEIQDYRPEGFGQGPLAKVKEWVDIHDTKTNRRGRRETHTMPQWAGSCWYYLRFCDAHNSQAPWSNENERYWMPVDLYIGGAEHAVLHLLYSRFWHRVFYEAGMVSTAEPFKKLINQGLVLATSYRIPGKGYVYPEDAREDNGVWMSASGEELEVRQEKMSKSKLNGVDPQILIDEFGADALRMYAMFSGPLDKNKLWSNQGVSGCRRFLNRFYEMATSASVQDVDDPKGMALAHRLVHRVGEDIEKMSLNTIPSSFMEFINEFVKLDIYPRSALAMVVQALAPIAPHISEELWTVLGYAPGIDAAGWPKVDPKYLEDTSVTFVIQVNGKLRARLDMDKATSKEDVLSLAREAVAKYLEGKEVKKEVFVPNRLVNFVL</sequence>
<comment type="catalytic activity">
    <reaction evidence="1">
        <text>tRNA(Leu) + L-leucine + ATP = L-leucyl-tRNA(Leu) + AMP + diphosphate</text>
        <dbReference type="Rhea" id="RHEA:11688"/>
        <dbReference type="Rhea" id="RHEA-COMP:9613"/>
        <dbReference type="Rhea" id="RHEA-COMP:9622"/>
        <dbReference type="ChEBI" id="CHEBI:30616"/>
        <dbReference type="ChEBI" id="CHEBI:33019"/>
        <dbReference type="ChEBI" id="CHEBI:57427"/>
        <dbReference type="ChEBI" id="CHEBI:78442"/>
        <dbReference type="ChEBI" id="CHEBI:78494"/>
        <dbReference type="ChEBI" id="CHEBI:456215"/>
        <dbReference type="EC" id="6.1.1.4"/>
    </reaction>
</comment>
<comment type="subcellular location">
    <subcellularLocation>
        <location evidence="1">Cytoplasm</location>
    </subcellularLocation>
</comment>
<comment type="similarity">
    <text evidence="1">Belongs to the class-I aminoacyl-tRNA synthetase family.</text>
</comment>
<feature type="chain" id="PRO_0000151996" description="Leucine--tRNA ligase">
    <location>
        <begin position="1"/>
        <end position="820"/>
    </location>
</feature>
<feature type="short sequence motif" description="'HIGH' region">
    <location>
        <begin position="40"/>
        <end position="51"/>
    </location>
</feature>
<feature type="short sequence motif" description="'KMSKS' region">
    <location>
        <begin position="601"/>
        <end position="605"/>
    </location>
</feature>
<feature type="binding site" evidence="1">
    <location>
        <position position="604"/>
    </location>
    <ligand>
        <name>ATP</name>
        <dbReference type="ChEBI" id="CHEBI:30616"/>
    </ligand>
</feature>
<name>SYL_CHLCV</name>
<organism>
    <name type="scientific">Chlamydia caviae (strain ATCC VR-813 / DSM 19441 / 03DC25 / GPIC)</name>
    <name type="common">Chlamydophila caviae</name>
    <dbReference type="NCBI Taxonomy" id="227941"/>
    <lineage>
        <taxon>Bacteria</taxon>
        <taxon>Pseudomonadati</taxon>
        <taxon>Chlamydiota</taxon>
        <taxon>Chlamydiia</taxon>
        <taxon>Chlamydiales</taxon>
        <taxon>Chlamydiaceae</taxon>
        <taxon>Chlamydia/Chlamydophila group</taxon>
        <taxon>Chlamydia</taxon>
    </lineage>
</organism>
<proteinExistence type="inferred from homology"/>
<protein>
    <recommendedName>
        <fullName evidence="1">Leucine--tRNA ligase</fullName>
        <ecNumber evidence="1">6.1.1.4</ecNumber>
    </recommendedName>
    <alternativeName>
        <fullName evidence="1">Leucyl-tRNA synthetase</fullName>
        <shortName evidence="1">LeuRS</shortName>
    </alternativeName>
</protein>